<protein>
    <recommendedName>
        <fullName evidence="1">Regulator of ribonuclease activity A</fullName>
    </recommendedName>
</protein>
<name>RRAA_YERPA</name>
<feature type="chain" id="PRO_1000013882" description="Regulator of ribonuclease activity A">
    <location>
        <begin position="1"/>
        <end position="161"/>
    </location>
</feature>
<proteinExistence type="inferred from homology"/>
<reference key="1">
    <citation type="journal article" date="2006" name="J. Bacteriol.">
        <title>Complete genome sequence of Yersinia pestis strains Antiqua and Nepal516: evidence of gene reduction in an emerging pathogen.</title>
        <authorList>
            <person name="Chain P.S.G."/>
            <person name="Hu P."/>
            <person name="Malfatti S.A."/>
            <person name="Radnedge L."/>
            <person name="Larimer F."/>
            <person name="Vergez L.M."/>
            <person name="Worsham P."/>
            <person name="Chu M.C."/>
            <person name="Andersen G.L."/>
        </authorList>
    </citation>
    <scope>NUCLEOTIDE SEQUENCE [LARGE SCALE GENOMIC DNA]</scope>
    <source>
        <strain>Antiqua</strain>
    </source>
</reference>
<dbReference type="EMBL" id="CP000308">
    <property type="protein sequence ID" value="ABG12222.1"/>
    <property type="molecule type" value="Genomic_DNA"/>
</dbReference>
<dbReference type="RefSeq" id="WP_002208945.1">
    <property type="nucleotide sequence ID" value="NZ_CP009906.1"/>
</dbReference>
<dbReference type="SMR" id="Q1CBF0"/>
<dbReference type="GeneID" id="57974491"/>
<dbReference type="KEGG" id="ypa:YPA_0253"/>
<dbReference type="Proteomes" id="UP000001971">
    <property type="component" value="Chromosome"/>
</dbReference>
<dbReference type="GO" id="GO:0005829">
    <property type="term" value="C:cytosol"/>
    <property type="evidence" value="ECO:0007669"/>
    <property type="project" value="TreeGrafter"/>
</dbReference>
<dbReference type="GO" id="GO:0060698">
    <property type="term" value="F:endoribonuclease inhibitor activity"/>
    <property type="evidence" value="ECO:0007669"/>
    <property type="project" value="UniProtKB-UniRule"/>
</dbReference>
<dbReference type="GO" id="GO:0019899">
    <property type="term" value="F:enzyme binding"/>
    <property type="evidence" value="ECO:0007669"/>
    <property type="project" value="UniProtKB-UniRule"/>
</dbReference>
<dbReference type="GO" id="GO:1902369">
    <property type="term" value="P:negative regulation of RNA catabolic process"/>
    <property type="evidence" value="ECO:0007669"/>
    <property type="project" value="TreeGrafter"/>
</dbReference>
<dbReference type="CDD" id="cd16841">
    <property type="entry name" value="RraA_family"/>
    <property type="match status" value="1"/>
</dbReference>
<dbReference type="Gene3D" id="3.50.30.40">
    <property type="entry name" value="Ribonuclease E inhibitor RraA/RraA-like"/>
    <property type="match status" value="1"/>
</dbReference>
<dbReference type="HAMAP" id="MF_00471">
    <property type="entry name" value="RraA"/>
    <property type="match status" value="1"/>
</dbReference>
<dbReference type="InterPro" id="IPR010203">
    <property type="entry name" value="RraA"/>
</dbReference>
<dbReference type="InterPro" id="IPR005493">
    <property type="entry name" value="RraA/RraA-like"/>
</dbReference>
<dbReference type="InterPro" id="IPR036704">
    <property type="entry name" value="RraA/RraA-like_sf"/>
</dbReference>
<dbReference type="InterPro" id="IPR014339">
    <property type="entry name" value="RraA_gpbac"/>
</dbReference>
<dbReference type="NCBIfam" id="TIGR01935">
    <property type="entry name" value="NOT-MenG"/>
    <property type="match status" value="1"/>
</dbReference>
<dbReference type="NCBIfam" id="NF006875">
    <property type="entry name" value="PRK09372.1"/>
    <property type="match status" value="1"/>
</dbReference>
<dbReference type="NCBIfam" id="TIGR02998">
    <property type="entry name" value="RraA_entero"/>
    <property type="match status" value="1"/>
</dbReference>
<dbReference type="PANTHER" id="PTHR33254">
    <property type="entry name" value="4-HYDROXY-4-METHYL-2-OXOGLUTARATE ALDOLASE 3-RELATED"/>
    <property type="match status" value="1"/>
</dbReference>
<dbReference type="PANTHER" id="PTHR33254:SF29">
    <property type="entry name" value="REGULATOR OF RIBONUCLEASE ACTIVITY A"/>
    <property type="match status" value="1"/>
</dbReference>
<dbReference type="Pfam" id="PF03737">
    <property type="entry name" value="RraA-like"/>
    <property type="match status" value="1"/>
</dbReference>
<dbReference type="SUPFAM" id="SSF89562">
    <property type="entry name" value="RraA-like"/>
    <property type="match status" value="1"/>
</dbReference>
<accession>Q1CBF0</accession>
<comment type="function">
    <text evidence="1">Globally modulates RNA abundance by binding to RNase E (Rne) and regulating its endonucleolytic activity. Can modulate Rne action in a substrate-dependent manner by altering the composition of the degradosome. Modulates RNA-binding and helicase activities of the degradosome.</text>
</comment>
<comment type="subunit">
    <text evidence="1">Homotrimer. Binds to both RNA-binding sites in the C-terminal region of Rne and to RhlB.</text>
</comment>
<comment type="subcellular location">
    <subcellularLocation>
        <location evidence="1">Cytoplasm</location>
    </subcellularLocation>
</comment>
<comment type="similarity">
    <text evidence="1">Belongs to the RraA family.</text>
</comment>
<organism>
    <name type="scientific">Yersinia pestis bv. Antiqua (strain Antiqua)</name>
    <dbReference type="NCBI Taxonomy" id="360102"/>
    <lineage>
        <taxon>Bacteria</taxon>
        <taxon>Pseudomonadati</taxon>
        <taxon>Pseudomonadota</taxon>
        <taxon>Gammaproteobacteria</taxon>
        <taxon>Enterobacterales</taxon>
        <taxon>Yersiniaceae</taxon>
        <taxon>Yersinia</taxon>
    </lineage>
</organism>
<evidence type="ECO:0000255" key="1">
    <source>
        <dbReference type="HAMAP-Rule" id="MF_00471"/>
    </source>
</evidence>
<sequence length="161" mass="17315">MKYDTSDLCDIYHEEVNVVEPLFSNFGGRTSFGGKITTVKCFEDNGLLFDLLEENGLGRVLVVDGGGSVRRALINAELAELALKNEWEGIVVYGAVRQVDDLAELDIGIQAMAAIPVGAADEGVGESDIRVNFGGVTFFSGDHLYADNTGIILSEDPLDIE</sequence>
<gene>
    <name evidence="1" type="primary">rraA</name>
    <name type="ordered locus">YPA_0253</name>
</gene>
<keyword id="KW-0963">Cytoplasm</keyword>